<keyword id="KW-0067">ATP-binding</keyword>
<keyword id="KW-1003">Cell membrane</keyword>
<keyword id="KW-0472">Membrane</keyword>
<keyword id="KW-0547">Nucleotide-binding</keyword>
<keyword id="KW-0592">Phosphate transport</keyword>
<keyword id="KW-1185">Reference proteome</keyword>
<keyword id="KW-1278">Translocase</keyword>
<keyword id="KW-0813">Transport</keyword>
<dbReference type="EC" id="7.3.2.1" evidence="1"/>
<dbReference type="EMBL" id="CP000033">
    <property type="protein sequence ID" value="AAV42256.1"/>
    <property type="molecule type" value="Genomic_DNA"/>
</dbReference>
<dbReference type="RefSeq" id="YP_193287.1">
    <property type="nucleotide sequence ID" value="NC_006814.3"/>
</dbReference>
<dbReference type="SMR" id="Q5FM18"/>
<dbReference type="STRING" id="272621.LBA0364"/>
<dbReference type="KEGG" id="lac:LBA0364"/>
<dbReference type="PATRIC" id="fig|272621.13.peg.351"/>
<dbReference type="eggNOG" id="COG1117">
    <property type="taxonomic scope" value="Bacteria"/>
</dbReference>
<dbReference type="HOGENOM" id="CLU_000604_1_22_9"/>
<dbReference type="OrthoDB" id="9802185at2"/>
<dbReference type="BioCyc" id="LACI272621:G1G49-359-MONOMER"/>
<dbReference type="Proteomes" id="UP000006381">
    <property type="component" value="Chromosome"/>
</dbReference>
<dbReference type="GO" id="GO:0005886">
    <property type="term" value="C:plasma membrane"/>
    <property type="evidence" value="ECO:0007669"/>
    <property type="project" value="UniProtKB-SubCell"/>
</dbReference>
<dbReference type="GO" id="GO:0005524">
    <property type="term" value="F:ATP binding"/>
    <property type="evidence" value="ECO:0007669"/>
    <property type="project" value="UniProtKB-KW"/>
</dbReference>
<dbReference type="GO" id="GO:0016887">
    <property type="term" value="F:ATP hydrolysis activity"/>
    <property type="evidence" value="ECO:0007669"/>
    <property type="project" value="InterPro"/>
</dbReference>
<dbReference type="GO" id="GO:0015415">
    <property type="term" value="F:ATPase-coupled phosphate ion transmembrane transporter activity"/>
    <property type="evidence" value="ECO:0007669"/>
    <property type="project" value="UniProtKB-EC"/>
</dbReference>
<dbReference type="GO" id="GO:0035435">
    <property type="term" value="P:phosphate ion transmembrane transport"/>
    <property type="evidence" value="ECO:0007669"/>
    <property type="project" value="InterPro"/>
</dbReference>
<dbReference type="CDD" id="cd03260">
    <property type="entry name" value="ABC_PstB_phosphate_transporter"/>
    <property type="match status" value="1"/>
</dbReference>
<dbReference type="Gene3D" id="3.40.50.300">
    <property type="entry name" value="P-loop containing nucleotide triphosphate hydrolases"/>
    <property type="match status" value="1"/>
</dbReference>
<dbReference type="InterPro" id="IPR003593">
    <property type="entry name" value="AAA+_ATPase"/>
</dbReference>
<dbReference type="InterPro" id="IPR003439">
    <property type="entry name" value="ABC_transporter-like_ATP-bd"/>
</dbReference>
<dbReference type="InterPro" id="IPR017871">
    <property type="entry name" value="ABC_transporter-like_CS"/>
</dbReference>
<dbReference type="InterPro" id="IPR027417">
    <property type="entry name" value="P-loop_NTPase"/>
</dbReference>
<dbReference type="InterPro" id="IPR005670">
    <property type="entry name" value="PstB-like"/>
</dbReference>
<dbReference type="NCBIfam" id="TIGR00972">
    <property type="entry name" value="3a0107s01c2"/>
    <property type="match status" value="1"/>
</dbReference>
<dbReference type="PANTHER" id="PTHR43423">
    <property type="entry name" value="ABC TRANSPORTER I FAMILY MEMBER 17"/>
    <property type="match status" value="1"/>
</dbReference>
<dbReference type="PANTHER" id="PTHR43423:SF10">
    <property type="entry name" value="PHOSPHATE IMPORT ATP-BINDING PROTEIN PSTB 2"/>
    <property type="match status" value="1"/>
</dbReference>
<dbReference type="Pfam" id="PF00005">
    <property type="entry name" value="ABC_tran"/>
    <property type="match status" value="1"/>
</dbReference>
<dbReference type="SMART" id="SM00382">
    <property type="entry name" value="AAA"/>
    <property type="match status" value="1"/>
</dbReference>
<dbReference type="SUPFAM" id="SSF52540">
    <property type="entry name" value="P-loop containing nucleoside triphosphate hydrolases"/>
    <property type="match status" value="1"/>
</dbReference>
<dbReference type="PROSITE" id="PS00211">
    <property type="entry name" value="ABC_TRANSPORTER_1"/>
    <property type="match status" value="1"/>
</dbReference>
<dbReference type="PROSITE" id="PS50893">
    <property type="entry name" value="ABC_TRANSPORTER_2"/>
    <property type="match status" value="1"/>
</dbReference>
<dbReference type="PROSITE" id="PS51238">
    <property type="entry name" value="PSTB"/>
    <property type="match status" value="1"/>
</dbReference>
<organism>
    <name type="scientific">Lactobacillus acidophilus (strain ATCC 700396 / NCK56 / N2 / NCFM)</name>
    <dbReference type="NCBI Taxonomy" id="272621"/>
    <lineage>
        <taxon>Bacteria</taxon>
        <taxon>Bacillati</taxon>
        <taxon>Bacillota</taxon>
        <taxon>Bacilli</taxon>
        <taxon>Lactobacillales</taxon>
        <taxon>Lactobacillaceae</taxon>
        <taxon>Lactobacillus</taxon>
    </lineage>
</organism>
<gene>
    <name evidence="1" type="primary">pstB1</name>
    <name type="ordered locus">LBA0364</name>
</gene>
<accession>Q5FM18</accession>
<proteinExistence type="inferred from homology"/>
<comment type="function">
    <text evidence="1">Part of the ABC transporter complex PstSACB involved in phosphate import. Responsible for energy coupling to the transport system.</text>
</comment>
<comment type="catalytic activity">
    <reaction evidence="1">
        <text>phosphate(out) + ATP + H2O = ADP + 2 phosphate(in) + H(+)</text>
        <dbReference type="Rhea" id="RHEA:24440"/>
        <dbReference type="ChEBI" id="CHEBI:15377"/>
        <dbReference type="ChEBI" id="CHEBI:15378"/>
        <dbReference type="ChEBI" id="CHEBI:30616"/>
        <dbReference type="ChEBI" id="CHEBI:43474"/>
        <dbReference type="ChEBI" id="CHEBI:456216"/>
        <dbReference type="EC" id="7.3.2.1"/>
    </reaction>
</comment>
<comment type="subunit">
    <text evidence="1">The complex is composed of two ATP-binding proteins (PstB), two transmembrane proteins (PstC and PstA) and a solute-binding protein (PstS).</text>
</comment>
<comment type="subcellular location">
    <subcellularLocation>
        <location evidence="1">Cell membrane</location>
        <topology evidence="1">Peripheral membrane protein</topology>
    </subcellularLocation>
</comment>
<comment type="similarity">
    <text evidence="1">Belongs to the ABC transporter superfamily. Phosphate importer (TC 3.A.1.7) family.</text>
</comment>
<evidence type="ECO:0000255" key="1">
    <source>
        <dbReference type="HAMAP-Rule" id="MF_01702"/>
    </source>
</evidence>
<sequence>MMQELKQSYIKTFDKDDVALSTNDLSVLYGGKVQKLFDASLQFKKNTITALIGASGSGKSTFLRSLNRMNDKVATVNGEIWFHGLDVNKPNINVYELRKSIGMVFQRPNPFPKSIRENIVYALKANGKTDKQELDKIVEESLRAAALWDEVKDKLDKSALALSGGQQQRLCIARALAVQPQILLLDEPASALDPVSTSKLEDTLKQLRSKYTMVMVTHNMQQASRISDYTAFFHLGHVIEYNSTAEIFTNPKGKITEDYIQGSFG</sequence>
<protein>
    <recommendedName>
        <fullName evidence="1">Phosphate import ATP-binding protein PstB 1</fullName>
        <ecNumber evidence="1">7.3.2.1</ecNumber>
    </recommendedName>
    <alternativeName>
        <fullName evidence="1">ABC phosphate transporter 1</fullName>
    </alternativeName>
    <alternativeName>
        <fullName evidence="1">Phosphate-transporting ATPase 1</fullName>
    </alternativeName>
</protein>
<name>PSTB1_LACAC</name>
<feature type="chain" id="PRO_0000272464" description="Phosphate import ATP-binding protein PstB 1">
    <location>
        <begin position="1"/>
        <end position="265"/>
    </location>
</feature>
<feature type="domain" description="ABC transporter" evidence="1">
    <location>
        <begin position="20"/>
        <end position="260"/>
    </location>
</feature>
<feature type="binding site" evidence="1">
    <location>
        <begin position="53"/>
        <end position="60"/>
    </location>
    <ligand>
        <name>ATP</name>
        <dbReference type="ChEBI" id="CHEBI:30616"/>
    </ligand>
</feature>
<reference key="1">
    <citation type="journal article" date="2005" name="Proc. Natl. Acad. Sci. U.S.A.">
        <title>Complete genome sequence of the probiotic lactic acid bacterium Lactobacillus acidophilus NCFM.</title>
        <authorList>
            <person name="Altermann E."/>
            <person name="Russell W.M."/>
            <person name="Azcarate-Peril M.A."/>
            <person name="Barrangou R."/>
            <person name="Buck B.L."/>
            <person name="McAuliffe O."/>
            <person name="Souther N."/>
            <person name="Dobson A."/>
            <person name="Duong T."/>
            <person name="Callanan M."/>
            <person name="Lick S."/>
            <person name="Hamrick A."/>
            <person name="Cano R."/>
            <person name="Klaenhammer T.R."/>
        </authorList>
    </citation>
    <scope>NUCLEOTIDE SEQUENCE [LARGE SCALE GENOMIC DNA]</scope>
    <source>
        <strain>ATCC 700396 / NCK56 / N2 / NCFM</strain>
    </source>
</reference>